<proteinExistence type="inferred from homology"/>
<reference key="1">
    <citation type="journal article" date="2000" name="J. Anim. Sci.">
        <title>Rapid communication: nucleotide sequences of the bovine, caprine, and ovine beta3-adrenergic receptor genes.</title>
        <authorList>
            <person name="Forrest R.H."/>
            <person name="Hickford J.G.H."/>
        </authorList>
    </citation>
    <scope>NUCLEOTIDE SEQUENCE [GENOMIC DNA]</scope>
</reference>
<evidence type="ECO:0000250" key="1"/>
<evidence type="ECO:0000250" key="2">
    <source>
        <dbReference type="UniProtKB" id="P13945"/>
    </source>
</evidence>
<evidence type="ECO:0000255" key="3"/>
<evidence type="ECO:0000255" key="4">
    <source>
        <dbReference type="PROSITE-ProRule" id="PRU00521"/>
    </source>
</evidence>
<evidence type="ECO:0000256" key="5">
    <source>
        <dbReference type="SAM" id="MobiDB-lite"/>
    </source>
</evidence>
<name>ADRB3_CAPHI</name>
<keyword id="KW-1003">Cell membrane</keyword>
<keyword id="KW-1015">Disulfide bond</keyword>
<keyword id="KW-0297">G-protein coupled receptor</keyword>
<keyword id="KW-0325">Glycoprotein</keyword>
<keyword id="KW-0449">Lipoprotein</keyword>
<keyword id="KW-0472">Membrane</keyword>
<keyword id="KW-0564">Palmitate</keyword>
<keyword id="KW-0675">Receptor</keyword>
<keyword id="KW-1185">Reference proteome</keyword>
<keyword id="KW-0807">Transducer</keyword>
<keyword id="KW-0812">Transmembrane</keyword>
<keyword id="KW-1133">Transmembrane helix</keyword>
<accession>Q9XT57</accession>
<organism>
    <name type="scientific">Capra hircus</name>
    <name type="common">Goat</name>
    <dbReference type="NCBI Taxonomy" id="9925"/>
    <lineage>
        <taxon>Eukaryota</taxon>
        <taxon>Metazoa</taxon>
        <taxon>Chordata</taxon>
        <taxon>Craniata</taxon>
        <taxon>Vertebrata</taxon>
        <taxon>Euteleostomi</taxon>
        <taxon>Mammalia</taxon>
        <taxon>Eutheria</taxon>
        <taxon>Laurasiatheria</taxon>
        <taxon>Artiodactyla</taxon>
        <taxon>Ruminantia</taxon>
        <taxon>Pecora</taxon>
        <taxon>Bovidae</taxon>
        <taxon>Caprinae</taxon>
        <taxon>Capra</taxon>
    </lineage>
</organism>
<comment type="function">
    <text>Beta-adrenergic receptors mediate the catecholamine-induced activation of adenylate cyclase through the action of G proteins. Beta-3 is involved in the regulation of lipolysis and thermogenesis.</text>
</comment>
<comment type="subunit">
    <text evidence="2">Interacts with ARRDC3.</text>
</comment>
<comment type="subcellular location">
    <subcellularLocation>
        <location>Cell membrane</location>
        <topology>Multi-pass membrane protein</topology>
    </subcellularLocation>
</comment>
<comment type="similarity">
    <text evidence="4">Belongs to the G-protein coupled receptor 1 family. Adrenergic receptor subfamily. ADRB3 sub-subfamily.</text>
</comment>
<dbReference type="EMBL" id="AF109929">
    <property type="protein sequence ID" value="AAD26148.1"/>
    <property type="molecule type" value="Genomic_DNA"/>
</dbReference>
<dbReference type="SMR" id="Q9XT57"/>
<dbReference type="STRING" id="9925.ENSCHIP00000011884"/>
<dbReference type="GlyCosmos" id="Q9XT57">
    <property type="glycosylation" value="2 sites, No reported glycans"/>
</dbReference>
<dbReference type="Proteomes" id="UP000291000">
    <property type="component" value="Unassembled WGS sequence"/>
</dbReference>
<dbReference type="Proteomes" id="UP000694566">
    <property type="component" value="Unplaced"/>
</dbReference>
<dbReference type="GO" id="GO:0005886">
    <property type="term" value="C:plasma membrane"/>
    <property type="evidence" value="ECO:0007669"/>
    <property type="project" value="UniProtKB-SubCell"/>
</dbReference>
<dbReference type="GO" id="GO:0043235">
    <property type="term" value="C:receptor complex"/>
    <property type="evidence" value="ECO:0000250"/>
    <property type="project" value="HGNC-UCL"/>
</dbReference>
<dbReference type="GO" id="GO:0004939">
    <property type="term" value="F:beta-adrenergic receptor activity"/>
    <property type="evidence" value="ECO:0000250"/>
    <property type="project" value="HGNC-UCL"/>
</dbReference>
<dbReference type="GO" id="GO:0015052">
    <property type="term" value="F:beta3-adrenergic receptor activity"/>
    <property type="evidence" value="ECO:0000250"/>
    <property type="project" value="HGNC-UCL"/>
</dbReference>
<dbReference type="GO" id="GO:0051379">
    <property type="term" value="F:epinephrine binding"/>
    <property type="evidence" value="ECO:0007669"/>
    <property type="project" value="TreeGrafter"/>
</dbReference>
<dbReference type="GO" id="GO:0042803">
    <property type="term" value="F:protein homodimerization activity"/>
    <property type="evidence" value="ECO:0000250"/>
    <property type="project" value="HGNC-UCL"/>
</dbReference>
<dbReference type="GO" id="GO:0071880">
    <property type="term" value="P:adenylate cyclase-activating adrenergic receptor signaling pathway"/>
    <property type="evidence" value="ECO:0000250"/>
    <property type="project" value="HGNC-UCL"/>
</dbReference>
<dbReference type="GO" id="GO:0002025">
    <property type="term" value="P:norepinephrine-epinephrine-mediated vasodilation involved in regulation of systemic arterial blood pressure"/>
    <property type="evidence" value="ECO:0007669"/>
    <property type="project" value="TreeGrafter"/>
</dbReference>
<dbReference type="GO" id="GO:0043410">
    <property type="term" value="P:positive regulation of MAPK cascade"/>
    <property type="evidence" value="ECO:0000250"/>
    <property type="project" value="HGNC-UCL"/>
</dbReference>
<dbReference type="Gene3D" id="1.20.1070.10">
    <property type="entry name" value="Rhodopsin 7-helix transmembrane proteins"/>
    <property type="match status" value="1"/>
</dbReference>
<dbReference type="InterPro" id="IPR002233">
    <property type="entry name" value="ADR_fam"/>
</dbReference>
<dbReference type="InterPro" id="IPR000681">
    <property type="entry name" value="ADRB3_rcpt"/>
</dbReference>
<dbReference type="InterPro" id="IPR000276">
    <property type="entry name" value="GPCR_Rhodpsn"/>
</dbReference>
<dbReference type="InterPro" id="IPR017452">
    <property type="entry name" value="GPCR_Rhodpsn_7TM"/>
</dbReference>
<dbReference type="PANTHER" id="PTHR24248">
    <property type="entry name" value="ADRENERGIC RECEPTOR-RELATED G-PROTEIN COUPLED RECEPTOR"/>
    <property type="match status" value="1"/>
</dbReference>
<dbReference type="PANTHER" id="PTHR24248:SF3">
    <property type="entry name" value="BETA-3 ADRENERGIC RECEPTOR"/>
    <property type="match status" value="1"/>
</dbReference>
<dbReference type="Pfam" id="PF00001">
    <property type="entry name" value="7tm_1"/>
    <property type="match status" value="1"/>
</dbReference>
<dbReference type="PRINTS" id="PR01103">
    <property type="entry name" value="ADRENERGICR"/>
</dbReference>
<dbReference type="PRINTS" id="PR00563">
    <property type="entry name" value="ADRENRGCB3AR"/>
</dbReference>
<dbReference type="PRINTS" id="PR00237">
    <property type="entry name" value="GPCRRHODOPSN"/>
</dbReference>
<dbReference type="SMART" id="SM01381">
    <property type="entry name" value="7TM_GPCR_Srsx"/>
    <property type="match status" value="1"/>
</dbReference>
<dbReference type="SUPFAM" id="SSF81321">
    <property type="entry name" value="Family A G protein-coupled receptor-like"/>
    <property type="match status" value="1"/>
</dbReference>
<dbReference type="PROSITE" id="PS00237">
    <property type="entry name" value="G_PROTEIN_RECEP_F1_1"/>
    <property type="match status" value="1"/>
</dbReference>
<dbReference type="PROSITE" id="PS50262">
    <property type="entry name" value="G_PROTEIN_RECEP_F1_2"/>
    <property type="match status" value="1"/>
</dbReference>
<sequence length="405" mass="43126">MAPWPPRNSSLTPWPDIPTLAPNTANASGLPGVPWAVALAGALLALAVLAIVGGNLLVIVAIARTPRLQTMTNVFVTSLATADLVVGLLVVPPGATLALTGHWPLGVTGCELWTSVDVLCVTASIETLCALAVDRYLAVTNPLRYGALVTKRRARAAVVLVWVVSAAVSFAPIMSKWWRVGADAEAQRCHSNPRCCTFASNMPYALLSSSVSFYLPLLVMLFVYARVFVVATRQLRLLRRELGRFPPEESPPAPSRSGSPGPAGPYASPAGVPSYGRRPARLLPLREHRALRTLGLIMGTFTLCWLPFFVVNVVRALGGPSLVSGPTFLALNWLGYANSAFNPLIYCRSPDFQSAFRRLLCRCRPEEHLAAASPPRAPSGAPRVLTSPAGPRQPSPLDGASCGLS</sequence>
<gene>
    <name type="primary">ADRB3</name>
    <name type="synonym">B3AR</name>
</gene>
<protein>
    <recommendedName>
        <fullName>Beta-3 adrenergic receptor</fullName>
    </recommendedName>
    <alternativeName>
        <fullName>Beta-3 adrenoreceptor</fullName>
        <shortName>Beta-3 adrenoceptor</shortName>
    </alternativeName>
</protein>
<feature type="chain" id="PRO_0000069140" description="Beta-3 adrenergic receptor">
    <location>
        <begin position="1"/>
        <end position="405"/>
    </location>
</feature>
<feature type="topological domain" description="Extracellular" evidence="1">
    <location>
        <begin position="1"/>
        <end position="36"/>
    </location>
</feature>
<feature type="transmembrane region" description="Helical; Name=1" evidence="1">
    <location>
        <begin position="37"/>
        <end position="63"/>
    </location>
</feature>
<feature type="topological domain" description="Cytoplasmic" evidence="1">
    <location>
        <begin position="64"/>
        <end position="72"/>
    </location>
</feature>
<feature type="transmembrane region" description="Helical; Name=2" evidence="1">
    <location>
        <begin position="73"/>
        <end position="91"/>
    </location>
</feature>
<feature type="topological domain" description="Extracellular" evidence="1">
    <location>
        <begin position="92"/>
        <end position="111"/>
    </location>
</feature>
<feature type="transmembrane region" description="Helical; Name=3" evidence="1">
    <location>
        <begin position="112"/>
        <end position="133"/>
    </location>
</feature>
<feature type="topological domain" description="Cytoplasmic" evidence="1">
    <location>
        <begin position="134"/>
        <end position="155"/>
    </location>
</feature>
<feature type="transmembrane region" description="Helical; Name=4" evidence="1">
    <location>
        <begin position="156"/>
        <end position="178"/>
    </location>
</feature>
<feature type="topological domain" description="Extracellular" evidence="1">
    <location>
        <begin position="179"/>
        <end position="203"/>
    </location>
</feature>
<feature type="transmembrane region" description="Helical; Name=5" evidence="1">
    <location>
        <begin position="204"/>
        <end position="225"/>
    </location>
</feature>
<feature type="topological domain" description="Cytoplasmic" evidence="1">
    <location>
        <begin position="226"/>
        <end position="292"/>
    </location>
</feature>
<feature type="transmembrane region" description="Helical; Name=6" evidence="1">
    <location>
        <begin position="293"/>
        <end position="314"/>
    </location>
</feature>
<feature type="topological domain" description="Extracellular" evidence="1">
    <location>
        <begin position="315"/>
        <end position="326"/>
    </location>
</feature>
<feature type="transmembrane region" description="Helical; Name=7" evidence="1">
    <location>
        <begin position="327"/>
        <end position="347"/>
    </location>
</feature>
<feature type="topological domain" description="Cytoplasmic" evidence="1">
    <location>
        <begin position="348"/>
        <end position="405"/>
    </location>
</feature>
<feature type="region of interest" description="Disordered" evidence="5">
    <location>
        <begin position="247"/>
        <end position="267"/>
    </location>
</feature>
<feature type="region of interest" description="Disordered" evidence="5">
    <location>
        <begin position="369"/>
        <end position="405"/>
    </location>
</feature>
<feature type="compositionally biased region" description="Low complexity" evidence="5">
    <location>
        <begin position="255"/>
        <end position="267"/>
    </location>
</feature>
<feature type="compositionally biased region" description="Low complexity" evidence="5">
    <location>
        <begin position="370"/>
        <end position="383"/>
    </location>
</feature>
<feature type="lipid moiety-binding region" description="S-palmitoyl cysteine" evidence="1">
    <location>
        <position position="361"/>
    </location>
</feature>
<feature type="glycosylation site" description="N-linked (GlcNAc...) asparagine" evidence="3">
    <location>
        <position position="8"/>
    </location>
</feature>
<feature type="glycosylation site" description="N-linked (GlcNAc...) asparagine" evidence="3">
    <location>
        <position position="26"/>
    </location>
</feature>
<feature type="disulfide bond" evidence="4">
    <location>
        <begin position="110"/>
        <end position="196"/>
    </location>
</feature>
<feature type="disulfide bond" evidence="4">
    <location>
        <begin position="189"/>
        <end position="195"/>
    </location>
</feature>